<keyword id="KW-1185">Reference proteome</keyword>
<keyword id="KW-0687">Ribonucleoprotein</keyword>
<keyword id="KW-0689">Ribosomal protein</keyword>
<keyword id="KW-0694">RNA-binding</keyword>
<keyword id="KW-0699">rRNA-binding</keyword>
<proteinExistence type="inferred from homology"/>
<name>RS11_BIFLO</name>
<feature type="chain" id="PRO_0000123111" description="Small ribosomal subunit protein uS11">
    <location>
        <begin position="1"/>
        <end position="132"/>
    </location>
</feature>
<feature type="region of interest" description="Disordered" evidence="2">
    <location>
        <begin position="1"/>
        <end position="24"/>
    </location>
</feature>
<feature type="compositionally biased region" description="Basic residues" evidence="2">
    <location>
        <begin position="7"/>
        <end position="16"/>
    </location>
</feature>
<accession>Q5KQA1</accession>
<comment type="function">
    <text evidence="1">Located on the platform of the 30S subunit, it bridges several disparate RNA helices of the 16S rRNA. Forms part of the Shine-Dalgarno cleft in the 70S ribosome.</text>
</comment>
<comment type="subunit">
    <text evidence="1">Part of the 30S ribosomal subunit. Interacts with proteins S7 and S18. Binds to IF-3.</text>
</comment>
<comment type="similarity">
    <text evidence="1">Belongs to the universal ribosomal protein uS11 family.</text>
</comment>
<evidence type="ECO:0000255" key="1">
    <source>
        <dbReference type="HAMAP-Rule" id="MF_01310"/>
    </source>
</evidence>
<evidence type="ECO:0000256" key="2">
    <source>
        <dbReference type="SAM" id="MobiDB-lite"/>
    </source>
</evidence>
<evidence type="ECO:0000305" key="3"/>
<sequence>MAAPKQAARKPRRRDRKSVPVGQAHIKSTFNNTIISITDPSGAVVSWASGGDVGFKGSRKSTPYAAGMAAESAARKAMEHGVKKVDVFVKGPGSGRETAIRSLQSAGLEVGSITDVTPQAHNGVRPPKRRRV</sequence>
<reference key="1">
    <citation type="journal article" date="2002" name="Proc. Natl. Acad. Sci. U.S.A.">
        <title>The genome sequence of Bifidobacterium longum reflects its adaptation to the human gastrointestinal tract.</title>
        <authorList>
            <person name="Schell M.A."/>
            <person name="Karmirantzou M."/>
            <person name="Snel B."/>
            <person name="Vilanova D."/>
            <person name="Berger B."/>
            <person name="Pessi G."/>
            <person name="Zwahlen M.-C."/>
            <person name="Desiere F."/>
            <person name="Bork P."/>
            <person name="Delley M."/>
            <person name="Pridmore R.D."/>
            <person name="Arigoni F."/>
        </authorList>
    </citation>
    <scope>NUCLEOTIDE SEQUENCE [LARGE SCALE GENOMIC DNA]</scope>
    <source>
        <strain>NCC 2705</strain>
    </source>
</reference>
<gene>
    <name evidence="1" type="primary">rpsK</name>
    <name type="ordered locus">BL1604.1</name>
</gene>
<protein>
    <recommendedName>
        <fullName evidence="1">Small ribosomal subunit protein uS11</fullName>
    </recommendedName>
    <alternativeName>
        <fullName evidence="3">30S ribosomal protein S11</fullName>
    </alternativeName>
</protein>
<dbReference type="EMBL" id="AE014295">
    <property type="protein sequence ID" value="AAW58056.1"/>
    <property type="molecule type" value="Genomic_DNA"/>
</dbReference>
<dbReference type="RefSeq" id="WP_003829907.1">
    <property type="nucleotide sequence ID" value="NC_004307.2"/>
</dbReference>
<dbReference type="RefSeq" id="YP_190223.1">
    <property type="nucleotide sequence ID" value="NC_004307.2"/>
</dbReference>
<dbReference type="SMR" id="Q5KQA1"/>
<dbReference type="STRING" id="206672.BL1604.1"/>
<dbReference type="EnsemblBacteria" id="AAW58056">
    <property type="protein sequence ID" value="AAW58056"/>
    <property type="gene ID" value="BL1604.1"/>
</dbReference>
<dbReference type="GeneID" id="69578872"/>
<dbReference type="KEGG" id="blo:BL1604.1"/>
<dbReference type="PATRIC" id="fig|206672.9.peg.1660"/>
<dbReference type="HOGENOM" id="CLU_072439_5_0_11"/>
<dbReference type="OrthoDB" id="9806415at2"/>
<dbReference type="PhylomeDB" id="Q5KQA1"/>
<dbReference type="PRO" id="PR:Q5KQA1"/>
<dbReference type="Proteomes" id="UP000000439">
    <property type="component" value="Chromosome"/>
</dbReference>
<dbReference type="GO" id="GO:1990904">
    <property type="term" value="C:ribonucleoprotein complex"/>
    <property type="evidence" value="ECO:0007669"/>
    <property type="project" value="UniProtKB-KW"/>
</dbReference>
<dbReference type="GO" id="GO:0005840">
    <property type="term" value="C:ribosome"/>
    <property type="evidence" value="ECO:0007669"/>
    <property type="project" value="UniProtKB-KW"/>
</dbReference>
<dbReference type="GO" id="GO:0019843">
    <property type="term" value="F:rRNA binding"/>
    <property type="evidence" value="ECO:0007669"/>
    <property type="project" value="UniProtKB-UniRule"/>
</dbReference>
<dbReference type="GO" id="GO:0003735">
    <property type="term" value="F:structural constituent of ribosome"/>
    <property type="evidence" value="ECO:0007669"/>
    <property type="project" value="InterPro"/>
</dbReference>
<dbReference type="GO" id="GO:0006412">
    <property type="term" value="P:translation"/>
    <property type="evidence" value="ECO:0007669"/>
    <property type="project" value="UniProtKB-UniRule"/>
</dbReference>
<dbReference type="FunFam" id="3.30.420.80:FF:000001">
    <property type="entry name" value="30S ribosomal protein S11"/>
    <property type="match status" value="1"/>
</dbReference>
<dbReference type="Gene3D" id="3.30.420.80">
    <property type="entry name" value="Ribosomal protein S11"/>
    <property type="match status" value="1"/>
</dbReference>
<dbReference type="HAMAP" id="MF_01310">
    <property type="entry name" value="Ribosomal_uS11"/>
    <property type="match status" value="1"/>
</dbReference>
<dbReference type="InterPro" id="IPR001971">
    <property type="entry name" value="Ribosomal_uS11"/>
</dbReference>
<dbReference type="InterPro" id="IPR019981">
    <property type="entry name" value="Ribosomal_uS11_bac-type"/>
</dbReference>
<dbReference type="InterPro" id="IPR018102">
    <property type="entry name" value="Ribosomal_uS11_CS"/>
</dbReference>
<dbReference type="InterPro" id="IPR036967">
    <property type="entry name" value="Ribosomal_uS11_sf"/>
</dbReference>
<dbReference type="NCBIfam" id="NF003698">
    <property type="entry name" value="PRK05309.1"/>
    <property type="match status" value="1"/>
</dbReference>
<dbReference type="NCBIfam" id="TIGR03632">
    <property type="entry name" value="uS11_bact"/>
    <property type="match status" value="1"/>
</dbReference>
<dbReference type="PANTHER" id="PTHR11759">
    <property type="entry name" value="40S RIBOSOMAL PROTEIN S14/30S RIBOSOMAL PROTEIN S11"/>
    <property type="match status" value="1"/>
</dbReference>
<dbReference type="Pfam" id="PF00411">
    <property type="entry name" value="Ribosomal_S11"/>
    <property type="match status" value="1"/>
</dbReference>
<dbReference type="PIRSF" id="PIRSF002131">
    <property type="entry name" value="Ribosomal_S11"/>
    <property type="match status" value="1"/>
</dbReference>
<dbReference type="SUPFAM" id="SSF53137">
    <property type="entry name" value="Translational machinery components"/>
    <property type="match status" value="1"/>
</dbReference>
<dbReference type="PROSITE" id="PS00054">
    <property type="entry name" value="RIBOSOMAL_S11"/>
    <property type="match status" value="1"/>
</dbReference>
<organism>
    <name type="scientific">Bifidobacterium longum (strain NCC 2705)</name>
    <dbReference type="NCBI Taxonomy" id="206672"/>
    <lineage>
        <taxon>Bacteria</taxon>
        <taxon>Bacillati</taxon>
        <taxon>Actinomycetota</taxon>
        <taxon>Actinomycetes</taxon>
        <taxon>Bifidobacteriales</taxon>
        <taxon>Bifidobacteriaceae</taxon>
        <taxon>Bifidobacterium</taxon>
    </lineage>
</organism>